<keyword id="KW-0227">DNA damage</keyword>
<keyword id="KW-0233">DNA recombination</keyword>
<keyword id="KW-0234">DNA repair</keyword>
<reference key="1">
    <citation type="journal article" date="2004" name="Proc. Natl. Acad. Sci. U.S.A.">
        <title>The louse-borne human pathogen Bartonella quintana is a genomic derivative of the zoonotic agent Bartonella henselae.</title>
        <authorList>
            <person name="Alsmark U.C.M."/>
            <person name="Frank A.C."/>
            <person name="Karlberg E.O."/>
            <person name="Legault B.-A."/>
            <person name="Ardell D.H."/>
            <person name="Canbaeck B."/>
            <person name="Eriksson A.-S."/>
            <person name="Naeslund A.K."/>
            <person name="Handley S.A."/>
            <person name="Huvet M."/>
            <person name="La Scola B."/>
            <person name="Holmberg M."/>
            <person name="Andersson S.G.E."/>
        </authorList>
    </citation>
    <scope>NUCLEOTIDE SEQUENCE [LARGE SCALE GENOMIC DNA]</scope>
    <source>
        <strain>ATCC 49882 / DSM 28221 / CCUG 30454 / Houston 1</strain>
    </source>
</reference>
<sequence length="256" mass="30017">MKWKEQAIILGTRQYGETSVILEVMTRQHGRYMGVVKGGRSRRMAVLLQPGNFVEAEWWARLDEHLGLFRLEALDLHAARLILFPEALYALQLIVFHLHLLPERDPHPILYDILHLFMQSFDEPFINAELLVRFEMRFLEELGFGLDLSRCAATGRLEKLCYVSPKSGRAVCEEAGHPWREKLLNLPQFLVQRTVRPVDFSDIKNGFILTGFFLMRHVWEPRNIKQPSVRISLIQLFEQRFRMQASFVDLKTINRM</sequence>
<name>RECO_BARHE</name>
<comment type="function">
    <text evidence="1">Involved in DNA repair and RecF pathway recombination.</text>
</comment>
<comment type="similarity">
    <text evidence="1">Belongs to the RecO family.</text>
</comment>
<dbReference type="EMBL" id="BX897699">
    <property type="protein sequence ID" value="CAF27319.1"/>
    <property type="molecule type" value="Genomic_DNA"/>
</dbReference>
<dbReference type="RefSeq" id="WP_011180442.1">
    <property type="nucleotide sequence ID" value="NZ_LRIJ02000001.1"/>
</dbReference>
<dbReference type="SMR" id="Q6G457"/>
<dbReference type="PaxDb" id="283166-BH05110"/>
<dbReference type="EnsemblBacteria" id="CAF27319">
    <property type="protein sequence ID" value="CAF27319"/>
    <property type="gene ID" value="BH05110"/>
</dbReference>
<dbReference type="GeneID" id="92985168"/>
<dbReference type="KEGG" id="bhe:BH05110"/>
<dbReference type="eggNOG" id="COG1381">
    <property type="taxonomic scope" value="Bacteria"/>
</dbReference>
<dbReference type="OrthoDB" id="9804792at2"/>
<dbReference type="Proteomes" id="UP000000421">
    <property type="component" value="Chromosome"/>
</dbReference>
<dbReference type="GO" id="GO:0043590">
    <property type="term" value="C:bacterial nucleoid"/>
    <property type="evidence" value="ECO:0007669"/>
    <property type="project" value="TreeGrafter"/>
</dbReference>
<dbReference type="GO" id="GO:0006310">
    <property type="term" value="P:DNA recombination"/>
    <property type="evidence" value="ECO:0007669"/>
    <property type="project" value="UniProtKB-UniRule"/>
</dbReference>
<dbReference type="GO" id="GO:0006302">
    <property type="term" value="P:double-strand break repair"/>
    <property type="evidence" value="ECO:0007669"/>
    <property type="project" value="TreeGrafter"/>
</dbReference>
<dbReference type="Gene3D" id="2.40.50.140">
    <property type="entry name" value="Nucleic acid-binding proteins"/>
    <property type="match status" value="1"/>
</dbReference>
<dbReference type="Gene3D" id="1.20.1440.120">
    <property type="entry name" value="Recombination protein O, C-terminal domain"/>
    <property type="match status" value="1"/>
</dbReference>
<dbReference type="HAMAP" id="MF_00201">
    <property type="entry name" value="RecO"/>
    <property type="match status" value="1"/>
</dbReference>
<dbReference type="InterPro" id="IPR037278">
    <property type="entry name" value="ARFGAP/RecO"/>
</dbReference>
<dbReference type="InterPro" id="IPR022572">
    <property type="entry name" value="DNA_rep/recomb_RecO_N"/>
</dbReference>
<dbReference type="InterPro" id="IPR012340">
    <property type="entry name" value="NA-bd_OB-fold"/>
</dbReference>
<dbReference type="InterPro" id="IPR003717">
    <property type="entry name" value="RecO"/>
</dbReference>
<dbReference type="InterPro" id="IPR042242">
    <property type="entry name" value="RecO_C"/>
</dbReference>
<dbReference type="NCBIfam" id="TIGR00613">
    <property type="entry name" value="reco"/>
    <property type="match status" value="1"/>
</dbReference>
<dbReference type="PANTHER" id="PTHR33991">
    <property type="entry name" value="DNA REPAIR PROTEIN RECO"/>
    <property type="match status" value="1"/>
</dbReference>
<dbReference type="PANTHER" id="PTHR33991:SF1">
    <property type="entry name" value="DNA REPAIR PROTEIN RECO"/>
    <property type="match status" value="1"/>
</dbReference>
<dbReference type="Pfam" id="PF02565">
    <property type="entry name" value="RecO_C"/>
    <property type="match status" value="1"/>
</dbReference>
<dbReference type="Pfam" id="PF11967">
    <property type="entry name" value="RecO_N"/>
    <property type="match status" value="1"/>
</dbReference>
<dbReference type="SUPFAM" id="SSF57863">
    <property type="entry name" value="ArfGap/RecO-like zinc finger"/>
    <property type="match status" value="1"/>
</dbReference>
<dbReference type="SUPFAM" id="SSF50249">
    <property type="entry name" value="Nucleic acid-binding proteins"/>
    <property type="match status" value="1"/>
</dbReference>
<accession>Q6G457</accession>
<proteinExistence type="inferred from homology"/>
<organism>
    <name type="scientific">Bartonella henselae (strain ATCC 49882 / DSM 28221 / CCUG 30454 / Houston 1)</name>
    <name type="common">Rochalimaea henselae</name>
    <dbReference type="NCBI Taxonomy" id="283166"/>
    <lineage>
        <taxon>Bacteria</taxon>
        <taxon>Pseudomonadati</taxon>
        <taxon>Pseudomonadota</taxon>
        <taxon>Alphaproteobacteria</taxon>
        <taxon>Hyphomicrobiales</taxon>
        <taxon>Bartonellaceae</taxon>
        <taxon>Bartonella</taxon>
    </lineage>
</organism>
<gene>
    <name evidence="1" type="primary">recO</name>
    <name type="ordered locus">BH05110</name>
</gene>
<evidence type="ECO:0000255" key="1">
    <source>
        <dbReference type="HAMAP-Rule" id="MF_00201"/>
    </source>
</evidence>
<protein>
    <recommendedName>
        <fullName evidence="1">DNA repair protein RecO</fullName>
    </recommendedName>
    <alternativeName>
        <fullName evidence="1">Recombination protein O</fullName>
    </alternativeName>
</protein>
<feature type="chain" id="PRO_0000204933" description="DNA repair protein RecO">
    <location>
        <begin position="1"/>
        <end position="256"/>
    </location>
</feature>